<keyword id="KW-0472">Membrane</keyword>
<keyword id="KW-0602">Photosynthesis</keyword>
<keyword id="KW-0604">Photosystem II</keyword>
<keyword id="KW-1185">Reference proteome</keyword>
<keyword id="KW-0793">Thylakoid</keyword>
<keyword id="KW-0812">Transmembrane</keyword>
<keyword id="KW-1133">Transmembrane helix</keyword>
<accession>Q8YY27</accession>
<feature type="chain" id="PRO_0000216891" description="Photosystem II reaction center protein Y">
    <location>
        <begin position="1"/>
        <end position="41"/>
    </location>
</feature>
<feature type="transmembrane region" description="Helical" evidence="1">
    <location>
        <begin position="7"/>
        <end position="25"/>
    </location>
</feature>
<evidence type="ECO:0000255" key="1">
    <source>
        <dbReference type="HAMAP-Rule" id="MF_00717"/>
    </source>
</evidence>
<gene>
    <name evidence="1" type="primary">psbY</name>
    <name type="ordered locus">asr1025</name>
</gene>
<comment type="function">
    <text evidence="1">Loosely associated component of the core of photosystem II (PSII), it is not always seen in crystals. PSII is a light-driven water plastoquinone oxidoreductase, using light energy to abstract electrons from H(2)O, generating a proton gradient subsequently used for ATP formation.</text>
</comment>
<comment type="subunit">
    <text evidence="1">PSII is composed of 1 copy each of membrane proteins PsbA, PsbB, PsbC, PsbD, PsbE, PsbF, PsbH, PsbI, PsbJ, PsbK, PsbL, PsbM, PsbT, PsbX, PsbY, PsbZ, Psb30/Ycf12, peripheral proteins PsbO, CyanoQ (PsbQ), PsbU, PsbV and a large number of cofactors. It forms dimeric complexes.</text>
</comment>
<comment type="subcellular location">
    <subcellularLocation>
        <location evidence="1">Cellular thylakoid membrane</location>
        <topology evidence="1">Single-pass membrane protein</topology>
    </subcellularLocation>
</comment>
<comment type="similarity">
    <text evidence="1">Belongs to the PsbY family.</text>
</comment>
<proteinExistence type="inferred from homology"/>
<organism>
    <name type="scientific">Nostoc sp. (strain PCC 7120 / SAG 25.82 / UTEX 2576)</name>
    <dbReference type="NCBI Taxonomy" id="103690"/>
    <lineage>
        <taxon>Bacteria</taxon>
        <taxon>Bacillati</taxon>
        <taxon>Cyanobacteriota</taxon>
        <taxon>Cyanophyceae</taxon>
        <taxon>Nostocales</taxon>
        <taxon>Nostocaceae</taxon>
        <taxon>Nostoc</taxon>
    </lineage>
</organism>
<reference key="1">
    <citation type="journal article" date="2001" name="DNA Res.">
        <title>Complete genomic sequence of the filamentous nitrogen-fixing cyanobacterium Anabaena sp. strain PCC 7120.</title>
        <authorList>
            <person name="Kaneko T."/>
            <person name="Nakamura Y."/>
            <person name="Wolk C.P."/>
            <person name="Kuritz T."/>
            <person name="Sasamoto S."/>
            <person name="Watanabe A."/>
            <person name="Iriguchi M."/>
            <person name="Ishikawa A."/>
            <person name="Kawashima K."/>
            <person name="Kimura T."/>
            <person name="Kishida Y."/>
            <person name="Kohara M."/>
            <person name="Matsumoto M."/>
            <person name="Matsuno A."/>
            <person name="Muraki A."/>
            <person name="Nakazaki N."/>
            <person name="Shimpo S."/>
            <person name="Sugimoto M."/>
            <person name="Takazawa M."/>
            <person name="Yamada M."/>
            <person name="Yasuda M."/>
            <person name="Tabata S."/>
        </authorList>
    </citation>
    <scope>NUCLEOTIDE SEQUENCE [LARGE SCALE GENOMIC DNA]</scope>
    <source>
        <strain>PCC 7120 / SAG 25.82 / UTEX 2576</strain>
    </source>
</reference>
<sequence length="41" mass="4385">MDIDFRVAIVLAPIAVAAGWAAFNIGAAAIRQVQNFLNREA</sequence>
<name>PSBY_NOSS1</name>
<dbReference type="EMBL" id="BA000019">
    <property type="protein sequence ID" value="BAB72982.1"/>
    <property type="molecule type" value="Genomic_DNA"/>
</dbReference>
<dbReference type="PIR" id="AF1934">
    <property type="entry name" value="AF1934"/>
</dbReference>
<dbReference type="RefSeq" id="WP_010995199.1">
    <property type="nucleotide sequence ID" value="NZ_RSCN01000025.1"/>
</dbReference>
<dbReference type="SMR" id="Q8YY27"/>
<dbReference type="STRING" id="103690.gene:10493039"/>
<dbReference type="KEGG" id="ana:asr1025"/>
<dbReference type="eggNOG" id="ENOG5033BVG">
    <property type="taxonomic scope" value="Bacteria"/>
</dbReference>
<dbReference type="Proteomes" id="UP000002483">
    <property type="component" value="Chromosome"/>
</dbReference>
<dbReference type="GO" id="GO:0009523">
    <property type="term" value="C:photosystem II"/>
    <property type="evidence" value="ECO:0007669"/>
    <property type="project" value="UniProtKB-KW"/>
</dbReference>
<dbReference type="GO" id="GO:0031676">
    <property type="term" value="C:plasma membrane-derived thylakoid membrane"/>
    <property type="evidence" value="ECO:0007669"/>
    <property type="project" value="UniProtKB-SubCell"/>
</dbReference>
<dbReference type="GO" id="GO:0030145">
    <property type="term" value="F:manganese ion binding"/>
    <property type="evidence" value="ECO:0007669"/>
    <property type="project" value="InterPro"/>
</dbReference>
<dbReference type="GO" id="GO:0015979">
    <property type="term" value="P:photosynthesis"/>
    <property type="evidence" value="ECO:0007669"/>
    <property type="project" value="UniProtKB-UniRule"/>
</dbReference>
<dbReference type="HAMAP" id="MF_00717">
    <property type="entry name" value="PSII_PsbY"/>
    <property type="match status" value="1"/>
</dbReference>
<dbReference type="InterPro" id="IPR009388">
    <property type="entry name" value="PSII_PsbY"/>
</dbReference>
<dbReference type="NCBIfam" id="NF009711">
    <property type="entry name" value="PRK13240.1"/>
    <property type="match status" value="1"/>
</dbReference>
<dbReference type="Pfam" id="PF06298">
    <property type="entry name" value="PsbY"/>
    <property type="match status" value="1"/>
</dbReference>
<protein>
    <recommendedName>
        <fullName evidence="1">Photosystem II reaction center protein Y</fullName>
    </recommendedName>
</protein>